<keyword id="KW-0903">Direct protein sequencing</keyword>
<keyword id="KW-1015">Disulfide bond</keyword>
<keyword id="KW-1199">Hemostasis impairing toxin</keyword>
<keyword id="KW-1201">Platelet aggregation inhibiting toxin</keyword>
<keyword id="KW-0964">Secreted</keyword>
<keyword id="KW-0732">Signal</keyword>
<keyword id="KW-0800">Toxin</keyword>
<organism>
    <name type="scientific">Bitis rhinoceros</name>
    <name type="common">West African gaboon viper</name>
    <name type="synonym">Vipera rhinoceros</name>
    <dbReference type="NCBI Taxonomy" id="715877"/>
    <lineage>
        <taxon>Eukaryota</taxon>
        <taxon>Metazoa</taxon>
        <taxon>Chordata</taxon>
        <taxon>Craniata</taxon>
        <taxon>Vertebrata</taxon>
        <taxon>Euteleostomi</taxon>
        <taxon>Lepidosauria</taxon>
        <taxon>Squamata</taxon>
        <taxon>Bifurcata</taxon>
        <taxon>Unidentata</taxon>
        <taxon>Episquamata</taxon>
        <taxon>Toxicofera</taxon>
        <taxon>Serpentes</taxon>
        <taxon>Colubroidea</taxon>
        <taxon>Viperidae</taxon>
        <taxon>Viperinae</taxon>
        <taxon>Bitis</taxon>
    </lineage>
</organism>
<reference key="1">
    <citation type="journal article" date="2012" name="J. Biol. Chem.">
        <title>Rhinocetin, a venom-derived integrin-specific antagonist inhibits collagen-induced platelet and endothelial cell functions.</title>
        <authorList>
            <person name="Vaiyapuri S."/>
            <person name="Hutchinson E.G."/>
            <person name="Ali M.S."/>
            <person name="Dannoura A."/>
            <person name="Stanley R.G."/>
            <person name="Harrison R.A."/>
            <person name="Bicknell A.B."/>
            <person name="Gibbins J.M."/>
        </authorList>
    </citation>
    <scope>NUCLEOTIDE SEQUENCE [MRNA]</scope>
    <scope>PROTEIN SEQUENCE OF 24-33</scope>
    <scope>FUNCTION</scope>
    <scope>IDENTIFICATION BY MASS SPECTROMETRY</scope>
    <source>
        <tissue>Venom</tissue>
        <tissue>Venom gland</tissue>
    </source>
</reference>
<sequence>MGRFIFLSSGWLVVFLSLSGTGADEGCLPGWSLYEGHCYKFFFIFKTWENAEKFCQEQSNGKNLASIEWLGKANFVAELVSQALTKTKYHVWIGLRREDEKQQCSSFWTDGSSVSYENVIRYTKCVGLNKNTGHRTWIALHCGDNYPFVCMSRLPH</sequence>
<dbReference type="EMBL" id="HE800429">
    <property type="protein sequence ID" value="CCH15161.1"/>
    <property type="molecule type" value="mRNA"/>
</dbReference>
<dbReference type="SMR" id="I7JUQ0"/>
<dbReference type="GO" id="GO:0005576">
    <property type="term" value="C:extracellular region"/>
    <property type="evidence" value="ECO:0007669"/>
    <property type="project" value="UniProtKB-SubCell"/>
</dbReference>
<dbReference type="GO" id="GO:0090729">
    <property type="term" value="F:toxin activity"/>
    <property type="evidence" value="ECO:0007669"/>
    <property type="project" value="UniProtKB-KW"/>
</dbReference>
<dbReference type="FunFam" id="3.10.100.10:FF:000087">
    <property type="entry name" value="Snaclec rhodocetin subunit delta"/>
    <property type="match status" value="1"/>
</dbReference>
<dbReference type="Gene3D" id="3.10.100.10">
    <property type="entry name" value="Mannose-Binding Protein A, subunit A"/>
    <property type="match status" value="1"/>
</dbReference>
<dbReference type="InterPro" id="IPR001304">
    <property type="entry name" value="C-type_lectin-like"/>
</dbReference>
<dbReference type="InterPro" id="IPR016186">
    <property type="entry name" value="C-type_lectin-like/link_sf"/>
</dbReference>
<dbReference type="InterPro" id="IPR016187">
    <property type="entry name" value="CTDL_fold"/>
</dbReference>
<dbReference type="InterPro" id="IPR050976">
    <property type="entry name" value="Snaclec"/>
</dbReference>
<dbReference type="PANTHER" id="PTHR22991">
    <property type="entry name" value="PROTEIN CBG13490"/>
    <property type="match status" value="1"/>
</dbReference>
<dbReference type="PANTHER" id="PTHR22991:SF40">
    <property type="entry name" value="PROTEIN CBG13490"/>
    <property type="match status" value="1"/>
</dbReference>
<dbReference type="Pfam" id="PF00059">
    <property type="entry name" value="Lectin_C"/>
    <property type="match status" value="1"/>
</dbReference>
<dbReference type="PRINTS" id="PR01504">
    <property type="entry name" value="PNCREATITSAP"/>
</dbReference>
<dbReference type="SMART" id="SM00034">
    <property type="entry name" value="CLECT"/>
    <property type="match status" value="1"/>
</dbReference>
<dbReference type="SUPFAM" id="SSF56436">
    <property type="entry name" value="C-type lectin-like"/>
    <property type="match status" value="1"/>
</dbReference>
<dbReference type="PROSITE" id="PS50041">
    <property type="entry name" value="C_TYPE_LECTIN_2"/>
    <property type="match status" value="1"/>
</dbReference>
<protein>
    <recommendedName>
        <fullName>Snaclec rhinocetin subunit alpha</fullName>
    </recommendedName>
    <alternativeName>
        <fullName>C-type lectin like protein 1</fullName>
    </alternativeName>
</protein>
<name>SLRA_BITRH</name>
<proteinExistence type="evidence at protein level"/>
<accession>I7JUQ0</accession>
<evidence type="ECO:0000250" key="1"/>
<evidence type="ECO:0000255" key="2">
    <source>
        <dbReference type="PROSITE-ProRule" id="PRU00040"/>
    </source>
</evidence>
<evidence type="ECO:0000269" key="3">
    <source>
    </source>
</evidence>
<evidence type="ECO:0000305" key="4"/>
<evidence type="ECO:0000305" key="5">
    <source>
    </source>
</evidence>
<comment type="function">
    <text evidence="3">Antagonist of the alpha-2 subunit of the integrin alpha-2/beta-1 (ITGA2/ITGB1) on human platelets and endothelial cells. This protein inhibits collagen-stimulated activation of human platelets in a dose-dependent manner. In addition, it antagonizes the binding of monoclonal antibodies against the alpha-2 subunit of integrin alpha-2/beta-1 to platelets and it coimmunoprecipitates with this integrin.</text>
</comment>
<comment type="subunit">
    <text evidence="1">Heterodimer; disulfide-linked.</text>
</comment>
<comment type="subcellular location">
    <subcellularLocation>
        <location>Secreted</location>
    </subcellularLocation>
</comment>
<comment type="tissue specificity">
    <text>Expressed by the venom gland.</text>
</comment>
<comment type="miscellaneous">
    <text evidence="5">Negative results: does not block the glycoprotein VI (GP6) and does not inhibit platelet activation induced by ADP-, and thrombin.</text>
</comment>
<comment type="similarity">
    <text evidence="4">Belongs to the snaclec family.</text>
</comment>
<feature type="signal peptide" evidence="3">
    <location>
        <begin position="1"/>
        <end position="23"/>
    </location>
</feature>
<feature type="chain" id="PRO_0000422545" description="Snaclec rhinocetin subunit alpha">
    <location>
        <begin position="24"/>
        <end position="156"/>
    </location>
</feature>
<feature type="domain" description="C-type lectin" evidence="2">
    <location>
        <begin position="34"/>
        <end position="151"/>
    </location>
</feature>
<feature type="disulfide bond" evidence="2">
    <location>
        <begin position="27"/>
        <end position="38"/>
    </location>
</feature>
<feature type="disulfide bond" evidence="2">
    <location>
        <begin position="55"/>
        <end position="150"/>
    </location>
</feature>
<feature type="disulfide bond" description="Interchain (with C-100 in beta chain)" evidence="2">
    <location>
        <position position="104"/>
    </location>
</feature>
<feature type="disulfide bond" evidence="2">
    <location>
        <begin position="125"/>
        <end position="142"/>
    </location>
</feature>